<feature type="chain" id="PRO_0000095558" description="Ferric uptake regulation protein">
    <location>
        <begin position="1"/>
        <end position="136"/>
    </location>
</feature>
<feature type="region of interest" description="DNA-binding" evidence="1">
    <location>
        <begin position="1"/>
        <end position="83"/>
    </location>
</feature>
<feature type="region of interest" description="Dimerization" evidence="1">
    <location>
        <begin position="84"/>
        <end position="136"/>
    </location>
</feature>
<feature type="binding site" evidence="1">
    <location>
        <position position="32"/>
    </location>
    <ligand>
        <name>Zn(2+)</name>
        <dbReference type="ChEBI" id="CHEBI:29105"/>
    </ligand>
</feature>
<feature type="binding site" evidence="1">
    <location>
        <position position="80"/>
    </location>
    <ligand>
        <name>Zn(2+)</name>
        <dbReference type="ChEBI" id="CHEBI:29105"/>
    </ligand>
</feature>
<feature type="binding site" evidence="1">
    <location>
        <position position="86"/>
    </location>
    <ligand>
        <name>Fe cation</name>
        <dbReference type="ChEBI" id="CHEBI:24875"/>
    </ligand>
</feature>
<feature type="binding site" evidence="1">
    <location>
        <position position="88"/>
    </location>
    <ligand>
        <name>Fe cation</name>
        <dbReference type="ChEBI" id="CHEBI:24875"/>
    </ligand>
</feature>
<feature type="binding site" evidence="1">
    <location>
        <position position="89"/>
    </location>
    <ligand>
        <name>Zn(2+)</name>
        <dbReference type="ChEBI" id="CHEBI:29105"/>
    </ligand>
</feature>
<feature type="binding site" evidence="1">
    <location>
        <position position="92"/>
    </location>
    <ligand>
        <name>Zn(2+)</name>
        <dbReference type="ChEBI" id="CHEBI:29105"/>
    </ligand>
</feature>
<feature type="binding site" evidence="1">
    <location>
        <position position="95"/>
    </location>
    <ligand>
        <name>Zn(2+)</name>
        <dbReference type="ChEBI" id="CHEBI:29105"/>
    </ligand>
</feature>
<feature type="binding site" evidence="1">
    <location>
        <position position="100"/>
    </location>
    <ligand>
        <name>Zn(2+)</name>
        <dbReference type="ChEBI" id="CHEBI:29105"/>
    </ligand>
</feature>
<feature type="binding site" evidence="1">
    <location>
        <position position="107"/>
    </location>
    <ligand>
        <name>Fe cation</name>
        <dbReference type="ChEBI" id="CHEBI:24875"/>
    </ligand>
</feature>
<feature type="binding site" evidence="1">
    <location>
        <position position="124"/>
    </location>
    <ligand>
        <name>Fe cation</name>
        <dbReference type="ChEBI" id="CHEBI:24875"/>
    </ligand>
</feature>
<protein>
    <recommendedName>
        <fullName>Ferric uptake regulation protein</fullName>
        <shortName>Ferric uptake regulator</shortName>
    </recommendedName>
</protein>
<reference key="1">
    <citation type="journal article" date="1994" name="Gene">
        <title>Cloning and sequencing of the Legionella pneumophila fur gene.</title>
        <authorList>
            <person name="Hickey E.K."/>
            <person name="Cianciotto N.P."/>
        </authorList>
    </citation>
    <scope>NUCLEOTIDE SEQUENCE [GENOMIC DNA]</scope>
    <source>
        <strain>130b / Wadsworth / Serogroup 1</strain>
    </source>
</reference>
<gene>
    <name type="primary">fur</name>
</gene>
<proteinExistence type="inferred from homology"/>
<comment type="function">
    <text>Acts as a global negative controlling element, employing Fe(2+) as a cofactor to bind the operator of the repressed genes.</text>
</comment>
<comment type="subunit">
    <text evidence="1">Homodimer.</text>
</comment>
<comment type="subcellular location">
    <subcellularLocation>
        <location evidence="1">Cytoplasm</location>
    </subcellularLocation>
</comment>
<comment type="similarity">
    <text evidence="2">Belongs to the Fur family.</text>
</comment>
<name>FUR_LEGPN</name>
<sequence>MEESQQLKDAGLKITLPRIKVLQILEQSRNHHLSAEAVYKALLESGEDVGLATVYRVLTQFEAAGLVSRHNFEGGHSVFELSQGEHHDHLVCVKCGRVEEFVDEIIEQRQKAIAERAHFKMTDHALNIYGICPQCQ</sequence>
<evidence type="ECO:0000250" key="1"/>
<evidence type="ECO:0000305" key="2"/>
<dbReference type="EMBL" id="U06072">
    <property type="protein sequence ID" value="AAA19656.1"/>
    <property type="molecule type" value="Genomic_DNA"/>
</dbReference>
<dbReference type="RefSeq" id="WP_011213031.1">
    <property type="nucleotide sequence ID" value="NZ_UGOV01000002.1"/>
</dbReference>
<dbReference type="SMR" id="Q48835"/>
<dbReference type="STRING" id="91892.BIZ52_02140"/>
<dbReference type="GeneID" id="57034376"/>
<dbReference type="eggNOG" id="COG0735">
    <property type="taxonomic scope" value="Bacteria"/>
</dbReference>
<dbReference type="OMA" id="HDHVILT"/>
<dbReference type="GO" id="GO:0005829">
    <property type="term" value="C:cytosol"/>
    <property type="evidence" value="ECO:0007669"/>
    <property type="project" value="TreeGrafter"/>
</dbReference>
<dbReference type="GO" id="GO:0003700">
    <property type="term" value="F:DNA-binding transcription factor activity"/>
    <property type="evidence" value="ECO:0007669"/>
    <property type="project" value="InterPro"/>
</dbReference>
<dbReference type="GO" id="GO:0000976">
    <property type="term" value="F:transcription cis-regulatory region binding"/>
    <property type="evidence" value="ECO:0007669"/>
    <property type="project" value="TreeGrafter"/>
</dbReference>
<dbReference type="GO" id="GO:0008270">
    <property type="term" value="F:zinc ion binding"/>
    <property type="evidence" value="ECO:0007669"/>
    <property type="project" value="TreeGrafter"/>
</dbReference>
<dbReference type="GO" id="GO:0045892">
    <property type="term" value="P:negative regulation of DNA-templated transcription"/>
    <property type="evidence" value="ECO:0007669"/>
    <property type="project" value="TreeGrafter"/>
</dbReference>
<dbReference type="GO" id="GO:1900705">
    <property type="term" value="P:negative regulation of siderophore biosynthetic process"/>
    <property type="evidence" value="ECO:0007669"/>
    <property type="project" value="TreeGrafter"/>
</dbReference>
<dbReference type="CDD" id="cd07153">
    <property type="entry name" value="Fur_like"/>
    <property type="match status" value="1"/>
</dbReference>
<dbReference type="FunFam" id="1.10.10.10:FF:000007">
    <property type="entry name" value="Ferric uptake regulation protein"/>
    <property type="match status" value="1"/>
</dbReference>
<dbReference type="FunFam" id="3.30.1490.190:FF:000001">
    <property type="entry name" value="Ferric uptake regulation protein"/>
    <property type="match status" value="1"/>
</dbReference>
<dbReference type="Gene3D" id="3.30.1490.190">
    <property type="match status" value="1"/>
</dbReference>
<dbReference type="Gene3D" id="1.10.10.10">
    <property type="entry name" value="Winged helix-like DNA-binding domain superfamily/Winged helix DNA-binding domain"/>
    <property type="match status" value="1"/>
</dbReference>
<dbReference type="InterPro" id="IPR002481">
    <property type="entry name" value="FUR"/>
</dbReference>
<dbReference type="InterPro" id="IPR043135">
    <property type="entry name" value="Fur_C"/>
</dbReference>
<dbReference type="InterPro" id="IPR036388">
    <property type="entry name" value="WH-like_DNA-bd_sf"/>
</dbReference>
<dbReference type="InterPro" id="IPR036390">
    <property type="entry name" value="WH_DNA-bd_sf"/>
</dbReference>
<dbReference type="NCBIfam" id="NF006999">
    <property type="entry name" value="PRK09462.1"/>
    <property type="match status" value="1"/>
</dbReference>
<dbReference type="PANTHER" id="PTHR33202:SF2">
    <property type="entry name" value="FERRIC UPTAKE REGULATION PROTEIN"/>
    <property type="match status" value="1"/>
</dbReference>
<dbReference type="PANTHER" id="PTHR33202">
    <property type="entry name" value="ZINC UPTAKE REGULATION PROTEIN"/>
    <property type="match status" value="1"/>
</dbReference>
<dbReference type="Pfam" id="PF01475">
    <property type="entry name" value="FUR"/>
    <property type="match status" value="1"/>
</dbReference>
<dbReference type="SUPFAM" id="SSF46785">
    <property type="entry name" value="Winged helix' DNA-binding domain"/>
    <property type="match status" value="1"/>
</dbReference>
<organism>
    <name type="scientific">Legionella pneumophila</name>
    <dbReference type="NCBI Taxonomy" id="446"/>
    <lineage>
        <taxon>Bacteria</taxon>
        <taxon>Pseudomonadati</taxon>
        <taxon>Pseudomonadota</taxon>
        <taxon>Gammaproteobacteria</taxon>
        <taxon>Legionellales</taxon>
        <taxon>Legionellaceae</taxon>
        <taxon>Legionella</taxon>
    </lineage>
</organism>
<accession>Q48835</accession>
<keyword id="KW-0963">Cytoplasm</keyword>
<keyword id="KW-0238">DNA-binding</keyword>
<keyword id="KW-0408">Iron</keyword>
<keyword id="KW-0479">Metal-binding</keyword>
<keyword id="KW-0678">Repressor</keyword>
<keyword id="KW-0804">Transcription</keyword>
<keyword id="KW-0805">Transcription regulation</keyword>
<keyword id="KW-0862">Zinc</keyword>